<gene>
    <name evidence="1" type="primary">nhaA2</name>
    <name type="ordered locus">CMM_2267</name>
</gene>
<sequence>MTSLIRSERVAAGLLLLAAVVGLVVANTPAGPGLLAWADGHLALPAIGVDLSLRHWVSDGLLVVFFFIVAVELKHEFLAGGLNSVSRALVPAIAAVGGVVVPALVYLAITAGSGLERGWPVPTATDIAFALGVLAVFGRGLPAAVRVFLLALAVLDDLIAIGIIAVFFTTGLDLGALAIAVAGVVLFAVVGRLGVGRTGAARIAVVALLVLVALVTWWATLSSGIHATIAGVALGFALPRLSGLRAAHALEPASNGIVLPLFAFSAALVAIPAIGLAELAPAFWGIALALPLGKLVGITAGGLLGAWVARRRGSAGGLAVPDLVTVSLLGGIGFTVSLLMSELAFAGLDDVRDEGTLAVLLGSGVAIVAAAVTLSIRSRRARRAGAAADDDDATRDDFPAHADGGPARA</sequence>
<protein>
    <recommendedName>
        <fullName evidence="1">Na(+)/H(+) antiporter NhaA 2</fullName>
    </recommendedName>
    <alternativeName>
        <fullName evidence="1">Sodium/proton antiporter NhaA 2</fullName>
    </alternativeName>
</protein>
<reference key="1">
    <citation type="journal article" date="2008" name="J. Bacteriol.">
        <title>The genome sequence of the tomato-pathogenic actinomycete Clavibacter michiganensis subsp. michiganensis NCPPB382 reveals a large island involved in pathogenicity.</title>
        <authorList>
            <person name="Gartemann K.-H."/>
            <person name="Abt B."/>
            <person name="Bekel T."/>
            <person name="Burger A."/>
            <person name="Engemann J."/>
            <person name="Fluegel M."/>
            <person name="Gaigalat L."/>
            <person name="Goesmann A."/>
            <person name="Graefen I."/>
            <person name="Kalinowski J."/>
            <person name="Kaup O."/>
            <person name="Kirchner O."/>
            <person name="Krause L."/>
            <person name="Linke B."/>
            <person name="McHardy A."/>
            <person name="Meyer F."/>
            <person name="Pohle S."/>
            <person name="Rueckert C."/>
            <person name="Schneiker S."/>
            <person name="Zellermann E.-M."/>
            <person name="Puehler A."/>
            <person name="Eichenlaub R."/>
            <person name="Kaiser O."/>
            <person name="Bartels D."/>
        </authorList>
    </citation>
    <scope>NUCLEOTIDE SEQUENCE [LARGE SCALE GENOMIC DNA]</scope>
    <source>
        <strain>NCPPB 382</strain>
    </source>
</reference>
<evidence type="ECO:0000255" key="1">
    <source>
        <dbReference type="HAMAP-Rule" id="MF_01844"/>
    </source>
</evidence>
<evidence type="ECO:0000256" key="2">
    <source>
        <dbReference type="SAM" id="MobiDB-lite"/>
    </source>
</evidence>
<keyword id="KW-0050">Antiport</keyword>
<keyword id="KW-1003">Cell membrane</keyword>
<keyword id="KW-0406">Ion transport</keyword>
<keyword id="KW-0472">Membrane</keyword>
<keyword id="KW-0915">Sodium</keyword>
<keyword id="KW-0739">Sodium transport</keyword>
<keyword id="KW-0812">Transmembrane</keyword>
<keyword id="KW-1133">Transmembrane helix</keyword>
<keyword id="KW-0813">Transport</keyword>
<feature type="chain" id="PRO_0000334268" description="Na(+)/H(+) antiporter NhaA 2">
    <location>
        <begin position="1"/>
        <end position="409"/>
    </location>
</feature>
<feature type="transmembrane region" description="Helical" evidence="1">
    <location>
        <begin position="10"/>
        <end position="30"/>
    </location>
</feature>
<feature type="transmembrane region" description="Helical" evidence="1">
    <location>
        <begin position="60"/>
        <end position="80"/>
    </location>
</feature>
<feature type="transmembrane region" description="Helical" evidence="1">
    <location>
        <begin position="89"/>
        <end position="109"/>
    </location>
</feature>
<feature type="transmembrane region" description="Helical" evidence="1">
    <location>
        <begin position="118"/>
        <end position="138"/>
    </location>
</feature>
<feature type="transmembrane region" description="Helical" evidence="1">
    <location>
        <begin position="148"/>
        <end position="168"/>
    </location>
</feature>
<feature type="transmembrane region" description="Helical" evidence="1">
    <location>
        <begin position="171"/>
        <end position="191"/>
    </location>
</feature>
<feature type="transmembrane region" description="Helical" evidence="1">
    <location>
        <begin position="203"/>
        <end position="223"/>
    </location>
</feature>
<feature type="transmembrane region" description="Helical" evidence="1">
    <location>
        <begin position="224"/>
        <end position="244"/>
    </location>
</feature>
<feature type="transmembrane region" description="Helical" evidence="1">
    <location>
        <begin position="257"/>
        <end position="277"/>
    </location>
</feature>
<feature type="transmembrane region" description="Helical" evidence="1">
    <location>
        <begin position="283"/>
        <end position="303"/>
    </location>
</feature>
<feature type="transmembrane region" description="Helical" evidence="1">
    <location>
        <begin position="328"/>
        <end position="348"/>
    </location>
</feature>
<feature type="transmembrane region" description="Helical" evidence="1">
    <location>
        <begin position="356"/>
        <end position="376"/>
    </location>
</feature>
<feature type="region of interest" description="Disordered" evidence="2">
    <location>
        <begin position="384"/>
        <end position="409"/>
    </location>
</feature>
<comment type="function">
    <text evidence="1">Na(+)/H(+) antiporter that extrudes sodium in exchange for external protons.</text>
</comment>
<comment type="catalytic activity">
    <reaction evidence="1">
        <text>Na(+)(in) + 2 H(+)(out) = Na(+)(out) + 2 H(+)(in)</text>
        <dbReference type="Rhea" id="RHEA:29251"/>
        <dbReference type="ChEBI" id="CHEBI:15378"/>
        <dbReference type="ChEBI" id="CHEBI:29101"/>
    </reaction>
    <physiologicalReaction direction="left-to-right" evidence="1">
        <dbReference type="Rhea" id="RHEA:29252"/>
    </physiologicalReaction>
</comment>
<comment type="subcellular location">
    <subcellularLocation>
        <location evidence="1">Cell membrane</location>
        <topology evidence="1">Multi-pass membrane protein</topology>
    </subcellularLocation>
</comment>
<comment type="similarity">
    <text evidence="1">Belongs to the NhaA Na(+)/H(+) (TC 2.A.33) antiporter family.</text>
</comment>
<dbReference type="EMBL" id="AM711867">
    <property type="protein sequence ID" value="CAN02339.1"/>
    <property type="molecule type" value="Genomic_DNA"/>
</dbReference>
<dbReference type="RefSeq" id="WP_012038957.1">
    <property type="nucleotide sequence ID" value="NC_009480.1"/>
</dbReference>
<dbReference type="SMR" id="A5CTB2"/>
<dbReference type="KEGG" id="cmi:CMM_2267"/>
<dbReference type="eggNOG" id="COG3004">
    <property type="taxonomic scope" value="Bacteria"/>
</dbReference>
<dbReference type="HOGENOM" id="CLU_015803_1_2_11"/>
<dbReference type="OrthoDB" id="9808135at2"/>
<dbReference type="Proteomes" id="UP000001564">
    <property type="component" value="Chromosome"/>
</dbReference>
<dbReference type="GO" id="GO:0005886">
    <property type="term" value="C:plasma membrane"/>
    <property type="evidence" value="ECO:0007669"/>
    <property type="project" value="UniProtKB-SubCell"/>
</dbReference>
<dbReference type="GO" id="GO:0015385">
    <property type="term" value="F:sodium:proton antiporter activity"/>
    <property type="evidence" value="ECO:0007669"/>
    <property type="project" value="TreeGrafter"/>
</dbReference>
<dbReference type="GO" id="GO:0006885">
    <property type="term" value="P:regulation of pH"/>
    <property type="evidence" value="ECO:0007669"/>
    <property type="project" value="InterPro"/>
</dbReference>
<dbReference type="Gene3D" id="1.20.1530.10">
    <property type="entry name" value="Na+/H+ antiporter like domain"/>
    <property type="match status" value="1"/>
</dbReference>
<dbReference type="HAMAP" id="MF_01844">
    <property type="entry name" value="NhaA"/>
    <property type="match status" value="1"/>
</dbReference>
<dbReference type="InterPro" id="IPR023171">
    <property type="entry name" value="Na/H_antiporter_dom_sf"/>
</dbReference>
<dbReference type="InterPro" id="IPR004670">
    <property type="entry name" value="NhaA"/>
</dbReference>
<dbReference type="PANTHER" id="PTHR30341:SF0">
    <property type="entry name" value="NA(+)_H(+) ANTIPORTER NHAA"/>
    <property type="match status" value="1"/>
</dbReference>
<dbReference type="PANTHER" id="PTHR30341">
    <property type="entry name" value="SODIUM ION/PROTON ANTIPORTER NHAA-RELATED"/>
    <property type="match status" value="1"/>
</dbReference>
<dbReference type="Pfam" id="PF06965">
    <property type="entry name" value="Na_H_antiport_1"/>
    <property type="match status" value="1"/>
</dbReference>
<accession>A5CTB2</accession>
<proteinExistence type="inferred from homology"/>
<name>NHAA2_CLAM3</name>
<organism>
    <name type="scientific">Clavibacter michiganensis subsp. michiganensis (strain NCPPB 382)</name>
    <dbReference type="NCBI Taxonomy" id="443906"/>
    <lineage>
        <taxon>Bacteria</taxon>
        <taxon>Bacillati</taxon>
        <taxon>Actinomycetota</taxon>
        <taxon>Actinomycetes</taxon>
        <taxon>Micrococcales</taxon>
        <taxon>Microbacteriaceae</taxon>
        <taxon>Clavibacter</taxon>
    </lineage>
</organism>